<proteinExistence type="evidence at transcript level"/>
<evidence type="ECO:0000255" key="1">
    <source>
        <dbReference type="HAMAP-Rule" id="MF_01356"/>
    </source>
</evidence>
<evidence type="ECO:0000269" key="2">
    <source>
    </source>
</evidence>
<evidence type="ECO:0000305" key="3"/>
<protein>
    <recommendedName>
        <fullName evidence="1">NAD(P)H-quinone oxidoreductase subunit K, chloroplastic</fullName>
        <ecNumber evidence="1">7.1.1.-</ecNumber>
    </recommendedName>
    <alternativeName>
        <fullName evidence="1">NAD(P)H dehydrogenase subunit K</fullName>
    </alternativeName>
    <alternativeName>
        <fullName evidence="1">NADH-plastoquinone oxidoreductase subunit K</fullName>
    </alternativeName>
</protein>
<keyword id="KW-0004">4Fe-4S</keyword>
<keyword id="KW-0150">Chloroplast</keyword>
<keyword id="KW-0408">Iron</keyword>
<keyword id="KW-0411">Iron-sulfur</keyword>
<keyword id="KW-0472">Membrane</keyword>
<keyword id="KW-0479">Metal-binding</keyword>
<keyword id="KW-0520">NAD</keyword>
<keyword id="KW-0521">NADP</keyword>
<keyword id="KW-0934">Plastid</keyword>
<keyword id="KW-0618">Plastoquinone</keyword>
<keyword id="KW-0874">Quinone</keyword>
<keyword id="KW-1185">Reference proteome</keyword>
<keyword id="KW-0691">RNA editing</keyword>
<keyword id="KW-0793">Thylakoid</keyword>
<keyword id="KW-1278">Translocase</keyword>
<keyword id="KW-0813">Transport</keyword>
<reference key="1">
    <citation type="journal article" date="1986" name="J. Biol. Chem.">
        <title>Protein PSII-G. An additional component of photosystem II identified through its plastid gene in maize.</title>
        <authorList>
            <person name="Steinmetz A.A."/>
            <person name="Castroviejo M."/>
            <person name="Sayre R.T."/>
            <person name="Bogorad L."/>
        </authorList>
    </citation>
    <scope>NUCLEOTIDE SEQUENCE [GENOMIC DNA]</scope>
</reference>
<reference key="2">
    <citation type="journal article" date="1989" name="Mol. Gen. Genet.">
        <title>Characterization of the ndhC-psbG-ORF157/159 operon of maize plastid DNA and of the cyanobacterium Synechocystis sp. PCC6803.</title>
        <authorList>
            <person name="Steinmueller K."/>
            <person name="Ley A.C."/>
            <person name="Steinmetz A.A."/>
            <person name="Sayre R.T."/>
            <person name="Bogorad L."/>
        </authorList>
    </citation>
    <scope>NUCLEOTIDE SEQUENCE [LARGE SCALE GENOMIC DNA]</scope>
    <source>
        <strain>cv. B73</strain>
    </source>
</reference>
<reference key="3">
    <citation type="journal article" date="1995" name="J. Mol. Biol.">
        <title>Complete sequence of the maize chloroplast genome: gene content, hotspots of divergence and fine tuning of genetic information by transcript editing.</title>
        <authorList>
            <person name="Maier R.M."/>
            <person name="Neckermann K."/>
            <person name="Igloi G.L."/>
            <person name="Koessel H."/>
        </authorList>
    </citation>
    <scope>NUCLEOTIDE SEQUENCE [LARGE SCALE GENOMIC DNA]</scope>
    <source>
        <strain>cv. B73</strain>
    </source>
</reference>
<reference key="4">
    <citation type="journal article" date="2006" name="J. Plant Physiol.">
        <title>Studies of the Ndh complex and photosystem II from mesophyll and bundle sheath chloroplasts of the C(4)-type plant Zea mays.</title>
        <authorList>
            <person name="Darie C.C."/>
            <person name="De Pascalis L."/>
            <person name="Mutschler B."/>
            <person name="Haehnel W."/>
        </authorList>
    </citation>
    <scope>RNA EDITING</scope>
    <scope>DEVELOPMENTAL STAGE</scope>
    <source>
        <strain>cv. Perceval</strain>
        <tissue>Bundle sheath cell</tissue>
        <tissue>Mesophyll cell</tissue>
    </source>
</reference>
<sequence>MSLIEFPLLDQTSSNSVISTTLNDLSNWSRLSSLWPLLYGTSCCFIEFASLIGSRFDFDRYGLVPRSSPRQADLILTAGTVTMKMAPSLVRLYEQMPEPKYVIAMGACTITGGMFSTDSYSTVRGVDKLIPVDVYLPGCPPKPEAVIDALTKLRKKIAREIIEDRTLCQSQKKNRSFTTRHKLYVRRSTHTGTYEQELLYQSPSTLDISSETFFKSKSSVSSYKLVN</sequence>
<organism>
    <name type="scientific">Zea mays</name>
    <name type="common">Maize</name>
    <dbReference type="NCBI Taxonomy" id="4577"/>
    <lineage>
        <taxon>Eukaryota</taxon>
        <taxon>Viridiplantae</taxon>
        <taxon>Streptophyta</taxon>
        <taxon>Embryophyta</taxon>
        <taxon>Tracheophyta</taxon>
        <taxon>Spermatophyta</taxon>
        <taxon>Magnoliopsida</taxon>
        <taxon>Liliopsida</taxon>
        <taxon>Poales</taxon>
        <taxon>Poaceae</taxon>
        <taxon>PACMAD clade</taxon>
        <taxon>Panicoideae</taxon>
        <taxon>Andropogonodae</taxon>
        <taxon>Andropogoneae</taxon>
        <taxon>Tripsacinae</taxon>
        <taxon>Zea</taxon>
    </lineage>
</organism>
<dbReference type="EC" id="7.1.1.-" evidence="1"/>
<dbReference type="EMBL" id="M12704">
    <property type="protein sequence ID" value="AAA84484.1"/>
    <property type="status" value="ALT_SEQ"/>
    <property type="molecule type" value="Genomic_DNA"/>
</dbReference>
<dbReference type="EMBL" id="X17438">
    <property type="protein sequence ID" value="CAA35482.1"/>
    <property type="status" value="ALT_SEQ"/>
    <property type="molecule type" value="Genomic_DNA"/>
</dbReference>
<dbReference type="EMBL" id="X86563">
    <property type="protein sequence ID" value="CAA60290.1"/>
    <property type="status" value="ALT_SEQ"/>
    <property type="molecule type" value="Genomic_DNA"/>
</dbReference>
<dbReference type="PIR" id="A25710">
    <property type="entry name" value="F2ZMG"/>
</dbReference>
<dbReference type="RefSeq" id="NP_043029.2">
    <property type="nucleotide sequence ID" value="NC_001666.2"/>
</dbReference>
<dbReference type="SMR" id="P06670"/>
<dbReference type="FunCoup" id="P06670">
    <property type="interactions" value="75"/>
</dbReference>
<dbReference type="STRING" id="4577.P06670"/>
<dbReference type="PaxDb" id="4577-GRMZM5G800980_P01"/>
<dbReference type="GeneID" id="845190"/>
<dbReference type="KEGG" id="zma:845190"/>
<dbReference type="MaizeGDB" id="69598"/>
<dbReference type="eggNOG" id="KOG1687">
    <property type="taxonomic scope" value="Eukaryota"/>
</dbReference>
<dbReference type="InParanoid" id="P06670"/>
<dbReference type="OrthoDB" id="772270at2759"/>
<dbReference type="Proteomes" id="UP000007305">
    <property type="component" value="Chloroplast"/>
</dbReference>
<dbReference type="ExpressionAtlas" id="P06670">
    <property type="expression patterns" value="baseline"/>
</dbReference>
<dbReference type="GO" id="GO:0009535">
    <property type="term" value="C:chloroplast thylakoid membrane"/>
    <property type="evidence" value="ECO:0007669"/>
    <property type="project" value="UniProtKB-SubCell"/>
</dbReference>
<dbReference type="GO" id="GO:0045271">
    <property type="term" value="C:respiratory chain complex I"/>
    <property type="evidence" value="ECO:0000318"/>
    <property type="project" value="GO_Central"/>
</dbReference>
<dbReference type="GO" id="GO:0051539">
    <property type="term" value="F:4 iron, 4 sulfur cluster binding"/>
    <property type="evidence" value="ECO:0007669"/>
    <property type="project" value="UniProtKB-KW"/>
</dbReference>
<dbReference type="GO" id="GO:0005506">
    <property type="term" value="F:iron ion binding"/>
    <property type="evidence" value="ECO:0007669"/>
    <property type="project" value="UniProtKB-UniRule"/>
</dbReference>
<dbReference type="GO" id="GO:0008137">
    <property type="term" value="F:NADH dehydrogenase (ubiquinone) activity"/>
    <property type="evidence" value="ECO:0000318"/>
    <property type="project" value="GO_Central"/>
</dbReference>
<dbReference type="GO" id="GO:0048038">
    <property type="term" value="F:quinone binding"/>
    <property type="evidence" value="ECO:0007669"/>
    <property type="project" value="UniProtKB-KW"/>
</dbReference>
<dbReference type="GO" id="GO:0009060">
    <property type="term" value="P:aerobic respiration"/>
    <property type="evidence" value="ECO:0000318"/>
    <property type="project" value="GO_Central"/>
</dbReference>
<dbReference type="GO" id="GO:0015990">
    <property type="term" value="P:electron transport coupled proton transport"/>
    <property type="evidence" value="ECO:0000318"/>
    <property type="project" value="GO_Central"/>
</dbReference>
<dbReference type="GO" id="GO:0019684">
    <property type="term" value="P:photosynthesis, light reaction"/>
    <property type="evidence" value="ECO:0007669"/>
    <property type="project" value="UniProtKB-UniRule"/>
</dbReference>
<dbReference type="FunFam" id="3.40.50.12280:FF:000003">
    <property type="entry name" value="NAD(P)H-quinone oxidoreductase subunit K, chloroplastic"/>
    <property type="match status" value="1"/>
</dbReference>
<dbReference type="Gene3D" id="3.40.50.12280">
    <property type="match status" value="1"/>
</dbReference>
<dbReference type="HAMAP" id="MF_01356">
    <property type="entry name" value="NDH1_NuoB"/>
    <property type="match status" value="1"/>
</dbReference>
<dbReference type="InterPro" id="IPR006137">
    <property type="entry name" value="NADH_UbQ_OxRdtase-like_20kDa"/>
</dbReference>
<dbReference type="InterPro" id="IPR006138">
    <property type="entry name" value="NADH_UQ_OxRdtase_20Kd_su"/>
</dbReference>
<dbReference type="NCBIfam" id="TIGR01957">
    <property type="entry name" value="nuoB_fam"/>
    <property type="match status" value="1"/>
</dbReference>
<dbReference type="NCBIfam" id="NF005012">
    <property type="entry name" value="PRK06411.1"/>
    <property type="match status" value="1"/>
</dbReference>
<dbReference type="PANTHER" id="PTHR11995">
    <property type="entry name" value="NADH DEHYDROGENASE"/>
    <property type="match status" value="1"/>
</dbReference>
<dbReference type="PANTHER" id="PTHR11995:SF14">
    <property type="entry name" value="NADH DEHYDROGENASE [UBIQUINONE] IRON-SULFUR PROTEIN 7, MITOCHONDRIAL"/>
    <property type="match status" value="1"/>
</dbReference>
<dbReference type="Pfam" id="PF01058">
    <property type="entry name" value="Oxidored_q6"/>
    <property type="match status" value="1"/>
</dbReference>
<dbReference type="SUPFAM" id="SSF56770">
    <property type="entry name" value="HydA/Nqo6-like"/>
    <property type="match status" value="1"/>
</dbReference>
<dbReference type="PROSITE" id="PS01150">
    <property type="entry name" value="COMPLEX1_20K"/>
    <property type="match status" value="1"/>
</dbReference>
<name>NDHK_MAIZE</name>
<geneLocation type="chloroplast"/>
<feature type="chain" id="PRO_0000118746" description="NAD(P)H-quinone oxidoreductase subunit K, chloroplastic">
    <location>
        <begin position="1"/>
        <end position="227"/>
    </location>
</feature>
<feature type="binding site" evidence="1">
    <location>
        <position position="43"/>
    </location>
    <ligand>
        <name>[4Fe-4S] cluster</name>
        <dbReference type="ChEBI" id="CHEBI:49883"/>
    </ligand>
</feature>
<feature type="binding site" evidence="1">
    <location>
        <position position="44"/>
    </location>
    <ligand>
        <name>[4Fe-4S] cluster</name>
        <dbReference type="ChEBI" id="CHEBI:49883"/>
    </ligand>
</feature>
<feature type="binding site" evidence="1">
    <location>
        <position position="108"/>
    </location>
    <ligand>
        <name>[4Fe-4S] cluster</name>
        <dbReference type="ChEBI" id="CHEBI:49883"/>
    </ligand>
</feature>
<feature type="binding site" evidence="1">
    <location>
        <position position="139"/>
    </location>
    <ligand>
        <name>[4Fe-4S] cluster</name>
        <dbReference type="ChEBI" id="CHEBI:49883"/>
    </ligand>
</feature>
<accession>P06670</accession>
<comment type="function">
    <text evidence="1">NDH shuttles electrons from NAD(P)H:plastoquinone, via FMN and iron-sulfur (Fe-S) centers, to quinones in the photosynthetic chain and possibly in a chloroplast respiratory chain. The immediate electron acceptor for the enzyme in this species is believed to be plastoquinone. Couples the redox reaction to proton translocation, and thus conserves the redox energy in a proton gradient.</text>
</comment>
<comment type="catalytic activity">
    <reaction evidence="1">
        <text>a plastoquinone + NADH + (n+1) H(+)(in) = a plastoquinol + NAD(+) + n H(+)(out)</text>
        <dbReference type="Rhea" id="RHEA:42608"/>
        <dbReference type="Rhea" id="RHEA-COMP:9561"/>
        <dbReference type="Rhea" id="RHEA-COMP:9562"/>
        <dbReference type="ChEBI" id="CHEBI:15378"/>
        <dbReference type="ChEBI" id="CHEBI:17757"/>
        <dbReference type="ChEBI" id="CHEBI:57540"/>
        <dbReference type="ChEBI" id="CHEBI:57945"/>
        <dbReference type="ChEBI" id="CHEBI:62192"/>
    </reaction>
</comment>
<comment type="catalytic activity">
    <reaction evidence="1">
        <text>a plastoquinone + NADPH + (n+1) H(+)(in) = a plastoquinol + NADP(+) + n H(+)(out)</text>
        <dbReference type="Rhea" id="RHEA:42612"/>
        <dbReference type="Rhea" id="RHEA-COMP:9561"/>
        <dbReference type="Rhea" id="RHEA-COMP:9562"/>
        <dbReference type="ChEBI" id="CHEBI:15378"/>
        <dbReference type="ChEBI" id="CHEBI:17757"/>
        <dbReference type="ChEBI" id="CHEBI:57783"/>
        <dbReference type="ChEBI" id="CHEBI:58349"/>
        <dbReference type="ChEBI" id="CHEBI:62192"/>
    </reaction>
</comment>
<comment type="cofactor">
    <cofactor evidence="1">
        <name>[4Fe-4S] cluster</name>
        <dbReference type="ChEBI" id="CHEBI:49883"/>
    </cofactor>
    <text evidence="1">Binds 1 [4Fe-4S] cluster.</text>
</comment>
<comment type="subunit">
    <text evidence="1">NDH is composed of at least 16 different subunits, 5 of which are encoded in the nucleus.</text>
</comment>
<comment type="subcellular location">
    <subcellularLocation>
        <location evidence="1">Plastid</location>
        <location evidence="1">Chloroplast thylakoid membrane</location>
        <topology evidence="1">Peripheral membrane protein</topology>
        <orientation evidence="1">Stromal side</orientation>
    </subcellularLocation>
</comment>
<comment type="developmental stage">
    <text evidence="2">The NDH complex is 2.5-3 times more abundant in bundle sheath than mesophyll cells.</text>
</comment>
<comment type="RNA editing">
    <location>
        <position position="22" evidence="2"/>
    </location>
</comment>
<comment type="similarity">
    <text evidence="1">Belongs to the complex I 20 kDa subunit family.</text>
</comment>
<comment type="sequence caution" evidence="3">
    <conflict type="erroneous initiation">
        <sequence resource="EMBL-CDS" id="AAA84484"/>
    </conflict>
    <text>Extended N-terminus.</text>
</comment>
<comment type="sequence caution" evidence="3">
    <conflict type="erroneous initiation">
        <sequence resource="EMBL-CDS" id="CAA35482"/>
    </conflict>
    <text>Extended N-terminus.</text>
</comment>
<comment type="sequence caution" evidence="3">
    <conflict type="erroneous initiation">
        <sequence resource="EMBL-CDS" id="CAA60290"/>
    </conflict>
    <text>Extended N-terminus.</text>
</comment>
<gene>
    <name evidence="1" type="primary">ndhK</name>
    <name type="synonym">psbG</name>
</gene>